<evidence type="ECO:0000255" key="1">
    <source>
        <dbReference type="HAMAP-Rule" id="MF_01224"/>
    </source>
</evidence>
<evidence type="ECO:0007829" key="2">
    <source>
        <dbReference type="PDB" id="2EKN"/>
    </source>
</evidence>
<organism>
    <name type="scientific">Pyrococcus horikoshii (strain ATCC 700860 / DSM 12428 / JCM 9974 / NBRC 100139 / OT-3)</name>
    <dbReference type="NCBI Taxonomy" id="70601"/>
    <lineage>
        <taxon>Archaea</taxon>
        <taxon>Methanobacteriati</taxon>
        <taxon>Methanobacteriota</taxon>
        <taxon>Thermococci</taxon>
        <taxon>Thermococcales</taxon>
        <taxon>Thermococcaceae</taxon>
        <taxon>Pyrococcus</taxon>
    </lineage>
</organism>
<comment type="function">
    <text evidence="1">Catalyzes the conversion of (8S)-3',8-cyclo-7,8-dihydroguanosine 5'-triphosphate to cyclic pyranopterin monophosphate (cPMP).</text>
</comment>
<comment type="catalytic activity">
    <reaction evidence="1">
        <text>(8S)-3',8-cyclo-7,8-dihydroguanosine 5'-triphosphate = cyclic pyranopterin phosphate + diphosphate</text>
        <dbReference type="Rhea" id="RHEA:49580"/>
        <dbReference type="ChEBI" id="CHEBI:33019"/>
        <dbReference type="ChEBI" id="CHEBI:59648"/>
        <dbReference type="ChEBI" id="CHEBI:131766"/>
        <dbReference type="EC" id="4.6.1.17"/>
    </reaction>
</comment>
<comment type="pathway">
    <text evidence="1">Cofactor biosynthesis; molybdopterin biosynthesis.</text>
</comment>
<comment type="subunit">
    <text evidence="1">Homohexamer; trimer of dimers.</text>
</comment>
<comment type="similarity">
    <text evidence="1">Belongs to the MoaC family.</text>
</comment>
<keyword id="KW-0002">3D-structure</keyword>
<keyword id="KW-0456">Lyase</keyword>
<keyword id="KW-0501">Molybdenum cofactor biosynthesis</keyword>
<gene>
    <name evidence="1" type="primary">moaC</name>
    <name type="ordered locus">PH1811</name>
</gene>
<feature type="chain" id="PRO_0000097861" description="Probable cyclic pyranopterin monophosphate synthase">
    <location>
        <begin position="1"/>
        <end position="159"/>
    </location>
</feature>
<feature type="active site" evidence="1">
    <location>
        <position position="126"/>
    </location>
</feature>
<feature type="binding site" evidence="1">
    <location>
        <begin position="75"/>
        <end position="77"/>
    </location>
    <ligand>
        <name>substrate</name>
    </ligand>
</feature>
<feature type="binding site" evidence="1">
    <location>
        <begin position="111"/>
        <end position="112"/>
    </location>
    <ligand>
        <name>substrate</name>
    </ligand>
</feature>
<feature type="strand" evidence="2">
    <location>
        <begin position="24"/>
        <end position="35"/>
    </location>
</feature>
<feature type="helix" evidence="2">
    <location>
        <begin position="38"/>
        <end position="46"/>
    </location>
</feature>
<feature type="helix" evidence="2">
    <location>
        <begin position="54"/>
        <end position="72"/>
    </location>
</feature>
<feature type="strand" evidence="2">
    <location>
        <begin position="81"/>
        <end position="90"/>
    </location>
</feature>
<feature type="strand" evidence="2">
    <location>
        <begin position="92"/>
        <end position="107"/>
    </location>
</feature>
<feature type="helix" evidence="2">
    <location>
        <begin position="110"/>
        <end position="132"/>
    </location>
</feature>
<feature type="strand" evidence="2">
    <location>
        <begin position="143"/>
        <end position="155"/>
    </location>
</feature>
<protein>
    <recommendedName>
        <fullName evidence="1">Probable cyclic pyranopterin monophosphate synthase</fullName>
        <ecNumber evidence="1">4.6.1.17</ecNumber>
    </recommendedName>
    <alternativeName>
        <fullName evidence="1">Molybdenum cofactor biosynthesis protein C</fullName>
    </alternativeName>
</protein>
<sequence length="159" mass="17652">MVGGLTHVDEKGVKMVEIGYKDVVFRKAVAKGRIKLKPETVKLIKEGKIEKGNVLATAQIAGILAVKRTPELIPLCHPIPITGVDITFDFGEDYIEVTCEVRAYYKTGVEMEALTGVTVALLAIWDMVKAVEKDEKGQYPYTRIENVHVVEKVKTHNSQ</sequence>
<name>MOAC_PYRHO</name>
<reference key="1">
    <citation type="journal article" date="1998" name="DNA Res.">
        <title>Complete sequence and gene organization of the genome of a hyper-thermophilic archaebacterium, Pyrococcus horikoshii OT3.</title>
        <authorList>
            <person name="Kawarabayasi Y."/>
            <person name="Sawada M."/>
            <person name="Horikawa H."/>
            <person name="Haikawa Y."/>
            <person name="Hino Y."/>
            <person name="Yamamoto S."/>
            <person name="Sekine M."/>
            <person name="Baba S."/>
            <person name="Kosugi H."/>
            <person name="Hosoyama A."/>
            <person name="Nagai Y."/>
            <person name="Sakai M."/>
            <person name="Ogura K."/>
            <person name="Otsuka R."/>
            <person name="Nakazawa H."/>
            <person name="Takamiya M."/>
            <person name="Ohfuku Y."/>
            <person name="Funahashi T."/>
            <person name="Tanaka T."/>
            <person name="Kudoh Y."/>
            <person name="Yamazaki J."/>
            <person name="Kushida N."/>
            <person name="Oguchi A."/>
            <person name="Aoki K."/>
            <person name="Yoshizawa T."/>
            <person name="Nakamura Y."/>
            <person name="Robb F.T."/>
            <person name="Horikoshi K."/>
            <person name="Masuchi Y."/>
            <person name="Shizuya H."/>
            <person name="Kikuchi H."/>
        </authorList>
    </citation>
    <scope>NUCLEOTIDE SEQUENCE [LARGE SCALE GENOMIC DNA]</scope>
    <source>
        <strain>ATCC 700860 / DSM 12428 / JCM 9974 / NBRC 100139 / OT-3</strain>
    </source>
</reference>
<reference key="2">
    <citation type="submission" date="2011-07" db="PDB data bank">
        <title>Structure of PH1811 protein from Pyrococcus horikoshii.</title>
        <authorList>
            <consortium name="RIKEN structural genomics initiative (RSGI)"/>
        </authorList>
    </citation>
    <scope>X-RAY CRYSTALLOGRAPHY (2.05 ANGSTROMS)</scope>
</reference>
<dbReference type="EC" id="4.6.1.17" evidence="1"/>
<dbReference type="EMBL" id="BA000001">
    <property type="protein sequence ID" value="BAA30930.1"/>
    <property type="molecule type" value="Genomic_DNA"/>
</dbReference>
<dbReference type="PIR" id="C71192">
    <property type="entry name" value="C71192"/>
</dbReference>
<dbReference type="RefSeq" id="WP_010885871.1">
    <property type="nucleotide sequence ID" value="NC_000961.1"/>
</dbReference>
<dbReference type="PDB" id="2EKN">
    <property type="method" value="X-ray"/>
    <property type="resolution" value="2.05 A"/>
    <property type="chains" value="A/B/C=1-159"/>
</dbReference>
<dbReference type="PDBsum" id="2EKN"/>
<dbReference type="SMR" id="O59475"/>
<dbReference type="STRING" id="70601.gene:9378813"/>
<dbReference type="EnsemblBacteria" id="BAA30930">
    <property type="protein sequence ID" value="BAA30930"/>
    <property type="gene ID" value="BAA30930"/>
</dbReference>
<dbReference type="GeneID" id="1442653"/>
<dbReference type="KEGG" id="pho:PH1811"/>
<dbReference type="eggNOG" id="arCOG01530">
    <property type="taxonomic scope" value="Archaea"/>
</dbReference>
<dbReference type="OrthoDB" id="10067at2157"/>
<dbReference type="UniPathway" id="UPA00344"/>
<dbReference type="EvolutionaryTrace" id="O59475"/>
<dbReference type="Proteomes" id="UP000000752">
    <property type="component" value="Chromosome"/>
</dbReference>
<dbReference type="GO" id="GO:0061799">
    <property type="term" value="F:cyclic pyranopterin monophosphate synthase activity"/>
    <property type="evidence" value="ECO:0007669"/>
    <property type="project" value="UniProtKB-UniRule"/>
</dbReference>
<dbReference type="GO" id="GO:0061798">
    <property type="term" value="F:GTP 3',8'-cyclase activity"/>
    <property type="evidence" value="ECO:0007669"/>
    <property type="project" value="TreeGrafter"/>
</dbReference>
<dbReference type="GO" id="GO:0006777">
    <property type="term" value="P:Mo-molybdopterin cofactor biosynthetic process"/>
    <property type="evidence" value="ECO:0007669"/>
    <property type="project" value="UniProtKB-UniRule"/>
</dbReference>
<dbReference type="CDD" id="cd01419">
    <property type="entry name" value="MoaC_A"/>
    <property type="match status" value="1"/>
</dbReference>
<dbReference type="Gene3D" id="3.30.70.640">
    <property type="entry name" value="Molybdopterin cofactor biosynthesis C (MoaC) domain"/>
    <property type="match status" value="1"/>
</dbReference>
<dbReference type="HAMAP" id="MF_01224_A">
    <property type="entry name" value="MoaC_A"/>
    <property type="match status" value="1"/>
</dbReference>
<dbReference type="InterPro" id="IPR023047">
    <property type="entry name" value="Mo_CF_biosynth-C_arc"/>
</dbReference>
<dbReference type="InterPro" id="IPR023045">
    <property type="entry name" value="MoaC"/>
</dbReference>
<dbReference type="InterPro" id="IPR036522">
    <property type="entry name" value="MoaC_sf"/>
</dbReference>
<dbReference type="InterPro" id="IPR050105">
    <property type="entry name" value="MoCo_biosynth_MoaA/MoaC"/>
</dbReference>
<dbReference type="InterPro" id="IPR002820">
    <property type="entry name" value="Mopterin_CF_biosynth-C_dom"/>
</dbReference>
<dbReference type="NCBIfam" id="TIGR00581">
    <property type="entry name" value="moaC"/>
    <property type="match status" value="1"/>
</dbReference>
<dbReference type="NCBIfam" id="NF006870">
    <property type="entry name" value="PRK09364.1"/>
    <property type="match status" value="1"/>
</dbReference>
<dbReference type="NCBIfam" id="NF008999">
    <property type="entry name" value="PRK12343.1"/>
    <property type="match status" value="1"/>
</dbReference>
<dbReference type="PANTHER" id="PTHR22960:SF0">
    <property type="entry name" value="MOLYBDENUM COFACTOR BIOSYNTHESIS PROTEIN 1"/>
    <property type="match status" value="1"/>
</dbReference>
<dbReference type="PANTHER" id="PTHR22960">
    <property type="entry name" value="MOLYBDOPTERIN COFACTOR SYNTHESIS PROTEIN A"/>
    <property type="match status" value="1"/>
</dbReference>
<dbReference type="Pfam" id="PF01967">
    <property type="entry name" value="MoaC"/>
    <property type="match status" value="1"/>
</dbReference>
<dbReference type="SUPFAM" id="SSF55040">
    <property type="entry name" value="Molybdenum cofactor biosynthesis protein C, MoaC"/>
    <property type="match status" value="1"/>
</dbReference>
<proteinExistence type="evidence at protein level"/>
<accession>O59475</accession>